<comment type="function">
    <text evidence="1">PPIases accelerate the folding of proteins. It catalyzes the cis-trans isomerization of proline imidic peptide bonds in oligopeptides (By similarity).</text>
</comment>
<comment type="catalytic activity">
    <reaction>
        <text>[protein]-peptidylproline (omega=180) = [protein]-peptidylproline (omega=0)</text>
        <dbReference type="Rhea" id="RHEA:16237"/>
        <dbReference type="Rhea" id="RHEA-COMP:10747"/>
        <dbReference type="Rhea" id="RHEA-COMP:10748"/>
        <dbReference type="ChEBI" id="CHEBI:83833"/>
        <dbReference type="ChEBI" id="CHEBI:83834"/>
        <dbReference type="EC" id="5.2.1.8"/>
    </reaction>
</comment>
<comment type="activity regulation">
    <text>Inhibited by both FK506 and rapamycin.</text>
</comment>
<comment type="subcellular location">
    <subcellularLocation>
        <location evidence="1">Cytoplasm</location>
    </subcellularLocation>
</comment>
<comment type="similarity">
    <text evidence="4">Belongs to the FKBP-type PPIase family. FKBP1 subfamily.</text>
</comment>
<comment type="sequence caution" evidence="4">
    <conflict type="erroneous gene model prediction">
        <sequence resource="EMBL-CDS" id="EAA59806"/>
    </conflict>
</comment>
<dbReference type="EC" id="5.2.1.8"/>
<dbReference type="EMBL" id="AJ717400">
    <property type="protein sequence ID" value="CAG30551.1"/>
    <property type="molecule type" value="Genomic_DNA"/>
</dbReference>
<dbReference type="EMBL" id="DQ185030">
    <property type="protein sequence ID" value="ABA26696.1"/>
    <property type="molecule type" value="Genomic_DNA"/>
</dbReference>
<dbReference type="EMBL" id="AACD01000061">
    <property type="protein sequence ID" value="EAA59806.1"/>
    <property type="status" value="ALT_SEQ"/>
    <property type="molecule type" value="Genomic_DNA"/>
</dbReference>
<dbReference type="EMBL" id="BN001302">
    <property type="protein sequence ID" value="CBF75808.1"/>
    <property type="molecule type" value="Genomic_DNA"/>
</dbReference>
<dbReference type="RefSeq" id="XP_661202.1">
    <property type="nucleotide sequence ID" value="XM_656110.1"/>
</dbReference>
<dbReference type="SMR" id="Q6KBA8"/>
<dbReference type="FunCoup" id="Q6KBA8">
    <property type="interactions" value="368"/>
</dbReference>
<dbReference type="STRING" id="227321.Q6KBA8"/>
<dbReference type="EnsemblFungi" id="CBF75808">
    <property type="protein sequence ID" value="CBF75808"/>
    <property type="gene ID" value="ANIA_03598"/>
</dbReference>
<dbReference type="VEuPathDB" id="FungiDB:AN3598"/>
<dbReference type="eggNOG" id="KOG0544">
    <property type="taxonomic scope" value="Eukaryota"/>
</dbReference>
<dbReference type="HOGENOM" id="CLU_013615_12_1_1"/>
<dbReference type="InParanoid" id="Q6KBA8"/>
<dbReference type="OMA" id="EQFDASW"/>
<dbReference type="OrthoDB" id="1902587at2759"/>
<dbReference type="Proteomes" id="UP000000560">
    <property type="component" value="Chromosome II"/>
</dbReference>
<dbReference type="GO" id="GO:0005737">
    <property type="term" value="C:cytoplasm"/>
    <property type="evidence" value="ECO:0000318"/>
    <property type="project" value="GO_Central"/>
</dbReference>
<dbReference type="GO" id="GO:0003755">
    <property type="term" value="F:peptidyl-prolyl cis-trans isomerase activity"/>
    <property type="evidence" value="ECO:0000318"/>
    <property type="project" value="GO_Central"/>
</dbReference>
<dbReference type="GO" id="GO:0031929">
    <property type="term" value="P:TOR signaling"/>
    <property type="evidence" value="ECO:0000315"/>
    <property type="project" value="AspGD"/>
</dbReference>
<dbReference type="FunFam" id="3.10.50.40:FF:000025">
    <property type="entry name" value="Peptidylprolyl isomerase"/>
    <property type="match status" value="1"/>
</dbReference>
<dbReference type="Gene3D" id="3.10.50.40">
    <property type="match status" value="1"/>
</dbReference>
<dbReference type="InterPro" id="IPR050689">
    <property type="entry name" value="FKBP-type_PPIase"/>
</dbReference>
<dbReference type="InterPro" id="IPR046357">
    <property type="entry name" value="PPIase_dom_sf"/>
</dbReference>
<dbReference type="InterPro" id="IPR001179">
    <property type="entry name" value="PPIase_FKBP_dom"/>
</dbReference>
<dbReference type="PANTHER" id="PTHR10516:SF443">
    <property type="entry name" value="FK506-BINDING PROTEIN 59-RELATED"/>
    <property type="match status" value="1"/>
</dbReference>
<dbReference type="PANTHER" id="PTHR10516">
    <property type="entry name" value="PEPTIDYL-PROLYL CIS-TRANS ISOMERASE"/>
    <property type="match status" value="1"/>
</dbReference>
<dbReference type="Pfam" id="PF00254">
    <property type="entry name" value="FKBP_C"/>
    <property type="match status" value="1"/>
</dbReference>
<dbReference type="SUPFAM" id="SSF54534">
    <property type="entry name" value="FKBP-like"/>
    <property type="match status" value="1"/>
</dbReference>
<dbReference type="PROSITE" id="PS50059">
    <property type="entry name" value="FKBP_PPIASE"/>
    <property type="match status" value="1"/>
</dbReference>
<evidence type="ECO:0000250" key="1"/>
<evidence type="ECO:0000255" key="2">
    <source>
        <dbReference type="PROSITE-ProRule" id="PRU00277"/>
    </source>
</evidence>
<evidence type="ECO:0000256" key="3">
    <source>
        <dbReference type="SAM" id="MobiDB-lite"/>
    </source>
</evidence>
<evidence type="ECO:0000305" key="4"/>
<feature type="chain" id="PRO_0000233325" description="FK506-binding protein 1A">
    <location>
        <begin position="1"/>
        <end position="108"/>
    </location>
</feature>
<feature type="domain" description="PPIase FKBP-type" evidence="2">
    <location>
        <begin position="20"/>
        <end position="108"/>
    </location>
</feature>
<feature type="region of interest" description="Disordered" evidence="3">
    <location>
        <begin position="1"/>
        <end position="20"/>
    </location>
</feature>
<protein>
    <recommendedName>
        <fullName>FK506-binding protein 1A</fullName>
        <shortName>FKBP</shortName>
        <shortName>FkbA</shortName>
        <ecNumber>5.2.1.8</ecNumber>
    </recommendedName>
    <alternativeName>
        <fullName>Peptidyl-prolyl cis-trans isomerase</fullName>
        <shortName>PPIase</shortName>
    </alternativeName>
    <alternativeName>
        <fullName>Rapamycin-binding protein</fullName>
    </alternativeName>
</protein>
<name>FKB1A_EMENI</name>
<sequence>MGVEVQRISPGDGKNFPKPGDTVSIHYTGTLADGSKFDSSRDRPGTFVTQIGVGRVIKGWDEGVLQLSVGEKAKLICTPDYAYGARGFPPVIPPNATLTFEVELLKIN</sequence>
<keyword id="KW-0963">Cytoplasm</keyword>
<keyword id="KW-0413">Isomerase</keyword>
<keyword id="KW-1185">Reference proteome</keyword>
<keyword id="KW-0697">Rotamase</keyword>
<organism>
    <name type="scientific">Emericella nidulans (strain FGSC A4 / ATCC 38163 / CBS 112.46 / NRRL 194 / M139)</name>
    <name type="common">Aspergillus nidulans</name>
    <dbReference type="NCBI Taxonomy" id="227321"/>
    <lineage>
        <taxon>Eukaryota</taxon>
        <taxon>Fungi</taxon>
        <taxon>Dikarya</taxon>
        <taxon>Ascomycota</taxon>
        <taxon>Pezizomycotina</taxon>
        <taxon>Eurotiomycetes</taxon>
        <taxon>Eurotiomycetidae</taxon>
        <taxon>Eurotiales</taxon>
        <taxon>Aspergillaceae</taxon>
        <taxon>Aspergillus</taxon>
        <taxon>Aspergillus subgen. Nidulantes</taxon>
    </lineage>
</organism>
<reference key="1">
    <citation type="journal article" date="2005" name="Eukaryot. Cell">
        <title>Genetic Analysis of the TOR Pathway in Aspergillus nidulans.</title>
        <authorList>
            <person name="Fitzgibbon G.J."/>
            <person name="Morozov I.Y."/>
            <person name="Jones M.G."/>
            <person name="Caddick M.X."/>
        </authorList>
    </citation>
    <scope>NUCLEOTIDE SEQUENCE [GENOMIC DNA]</scope>
</reference>
<reference key="2">
    <citation type="submission" date="2005-08" db="EMBL/GenBank/DDBJ databases">
        <title>Rapamycin resistant mutations in fkbA encoding a FK506-binding protein of Aspergillus nidulans.</title>
        <authorList>
            <person name="Cha M.-J."/>
            <person name="Lee J.-W."/>
            <person name="Sohn C."/>
            <person name="Kwon N.-J."/>
            <person name="Chae S.-K."/>
        </authorList>
    </citation>
    <scope>NUCLEOTIDE SEQUENCE [GENOMIC DNA]</scope>
</reference>
<reference key="3">
    <citation type="journal article" date="2005" name="Nature">
        <title>Sequencing of Aspergillus nidulans and comparative analysis with A. fumigatus and A. oryzae.</title>
        <authorList>
            <person name="Galagan J.E."/>
            <person name="Calvo S.E."/>
            <person name="Cuomo C."/>
            <person name="Ma L.-J."/>
            <person name="Wortman J.R."/>
            <person name="Batzoglou S."/>
            <person name="Lee S.-I."/>
            <person name="Bastuerkmen M."/>
            <person name="Spevak C.C."/>
            <person name="Clutterbuck J."/>
            <person name="Kapitonov V."/>
            <person name="Jurka J."/>
            <person name="Scazzocchio C."/>
            <person name="Farman M.L."/>
            <person name="Butler J."/>
            <person name="Purcell S."/>
            <person name="Harris S."/>
            <person name="Braus G.H."/>
            <person name="Draht O."/>
            <person name="Busch S."/>
            <person name="D'Enfert C."/>
            <person name="Bouchier C."/>
            <person name="Goldman G.H."/>
            <person name="Bell-Pedersen D."/>
            <person name="Griffiths-Jones S."/>
            <person name="Doonan J.H."/>
            <person name="Yu J."/>
            <person name="Vienken K."/>
            <person name="Pain A."/>
            <person name="Freitag M."/>
            <person name="Selker E.U."/>
            <person name="Archer D.B."/>
            <person name="Penalva M.A."/>
            <person name="Oakley B.R."/>
            <person name="Momany M."/>
            <person name="Tanaka T."/>
            <person name="Kumagai T."/>
            <person name="Asai K."/>
            <person name="Machida M."/>
            <person name="Nierman W.C."/>
            <person name="Denning D.W."/>
            <person name="Caddick M.X."/>
            <person name="Hynes M."/>
            <person name="Paoletti M."/>
            <person name="Fischer R."/>
            <person name="Miller B.L."/>
            <person name="Dyer P.S."/>
            <person name="Sachs M.S."/>
            <person name="Osmani S.A."/>
            <person name="Birren B.W."/>
        </authorList>
    </citation>
    <scope>NUCLEOTIDE SEQUENCE [LARGE SCALE GENOMIC DNA]</scope>
    <source>
        <strain>FGSC A4 / ATCC 38163 / CBS 112.46 / NRRL 194 / M139</strain>
    </source>
</reference>
<reference key="4">
    <citation type="journal article" date="2009" name="Fungal Genet. Biol.">
        <title>The 2008 update of the Aspergillus nidulans genome annotation: a community effort.</title>
        <authorList>
            <person name="Wortman J.R."/>
            <person name="Gilsenan J.M."/>
            <person name="Joardar V."/>
            <person name="Deegan J."/>
            <person name="Clutterbuck J."/>
            <person name="Andersen M.R."/>
            <person name="Archer D."/>
            <person name="Bencina M."/>
            <person name="Braus G."/>
            <person name="Coutinho P."/>
            <person name="von Dohren H."/>
            <person name="Doonan J."/>
            <person name="Driessen A.J."/>
            <person name="Durek P."/>
            <person name="Espeso E."/>
            <person name="Fekete E."/>
            <person name="Flipphi M."/>
            <person name="Estrada C.G."/>
            <person name="Geysens S."/>
            <person name="Goldman G."/>
            <person name="de Groot P.W."/>
            <person name="Hansen K."/>
            <person name="Harris S.D."/>
            <person name="Heinekamp T."/>
            <person name="Helmstaedt K."/>
            <person name="Henrissat B."/>
            <person name="Hofmann G."/>
            <person name="Homan T."/>
            <person name="Horio T."/>
            <person name="Horiuchi H."/>
            <person name="James S."/>
            <person name="Jones M."/>
            <person name="Karaffa L."/>
            <person name="Karanyi Z."/>
            <person name="Kato M."/>
            <person name="Keller N."/>
            <person name="Kelly D.E."/>
            <person name="Kiel J.A."/>
            <person name="Kim J.M."/>
            <person name="van der Klei I.J."/>
            <person name="Klis F.M."/>
            <person name="Kovalchuk A."/>
            <person name="Krasevec N."/>
            <person name="Kubicek C.P."/>
            <person name="Liu B."/>
            <person name="Maccabe A."/>
            <person name="Meyer V."/>
            <person name="Mirabito P."/>
            <person name="Miskei M."/>
            <person name="Mos M."/>
            <person name="Mullins J."/>
            <person name="Nelson D.R."/>
            <person name="Nielsen J."/>
            <person name="Oakley B.R."/>
            <person name="Osmani S.A."/>
            <person name="Pakula T."/>
            <person name="Paszewski A."/>
            <person name="Paulsen I."/>
            <person name="Pilsyk S."/>
            <person name="Pocsi I."/>
            <person name="Punt P.J."/>
            <person name="Ram A.F."/>
            <person name="Ren Q."/>
            <person name="Robellet X."/>
            <person name="Robson G."/>
            <person name="Seiboth B."/>
            <person name="van Solingen P."/>
            <person name="Specht T."/>
            <person name="Sun J."/>
            <person name="Taheri-Talesh N."/>
            <person name="Takeshita N."/>
            <person name="Ussery D."/>
            <person name="vanKuyk P.A."/>
            <person name="Visser H."/>
            <person name="van de Vondervoort P.J."/>
            <person name="de Vries R.P."/>
            <person name="Walton J."/>
            <person name="Xiang X."/>
            <person name="Xiong Y."/>
            <person name="Zeng A.P."/>
            <person name="Brandt B.W."/>
            <person name="Cornell M.J."/>
            <person name="van den Hondel C.A."/>
            <person name="Visser J."/>
            <person name="Oliver S.G."/>
            <person name="Turner G."/>
        </authorList>
    </citation>
    <scope>GENOME REANNOTATION</scope>
    <source>
        <strain>FGSC A4 / ATCC 38163 / CBS 112.46 / NRRL 194 / M139</strain>
    </source>
</reference>
<gene>
    <name type="primary">fprA</name>
    <name type="ORF">AN3598</name>
</gene>
<proteinExistence type="inferred from homology"/>
<accession>Q6KBA8</accession>
<accession>C8V481</accession>
<accession>Q5B782</accession>